<comment type="function">
    <text>Probably binds to the DNA sequence 5'-TGAC-3'.</text>
</comment>
<comment type="subcellular location">
    <subcellularLocation>
        <location evidence="3">Nucleus</location>
    </subcellularLocation>
</comment>
<comment type="tissue specificity">
    <text>Strongly expressed in ear inflorescence primordia and shoot meristem. Weakly expressed in embryos. Absent from leaves.</text>
</comment>
<comment type="similarity">
    <text evidence="2">Belongs to the TALE/KNOX homeobox family.</text>
</comment>
<keyword id="KW-0238">DNA-binding</keyword>
<keyword id="KW-0371">Homeobox</keyword>
<keyword id="KW-0539">Nucleus</keyword>
<keyword id="KW-1185">Reference proteome</keyword>
<proteinExistence type="evidence at transcript level"/>
<dbReference type="SMR" id="P56662"/>
<dbReference type="STRING" id="4577.P56662"/>
<dbReference type="PaxDb" id="4577-GRMZM2G452178_P01"/>
<dbReference type="eggNOG" id="KOG0773">
    <property type="taxonomic scope" value="Eukaryota"/>
</dbReference>
<dbReference type="InParanoid" id="P56662"/>
<dbReference type="Proteomes" id="UP000007305">
    <property type="component" value="Unplaced"/>
</dbReference>
<dbReference type="ExpressionAtlas" id="P56662">
    <property type="expression patterns" value="baseline and differential"/>
</dbReference>
<dbReference type="GO" id="GO:0005634">
    <property type="term" value="C:nucleus"/>
    <property type="evidence" value="ECO:0000318"/>
    <property type="project" value="GO_Central"/>
</dbReference>
<dbReference type="GO" id="GO:0003677">
    <property type="term" value="F:DNA binding"/>
    <property type="evidence" value="ECO:0007669"/>
    <property type="project" value="UniProtKB-KW"/>
</dbReference>
<dbReference type="GO" id="GO:0000981">
    <property type="term" value="F:DNA-binding transcription factor activity, RNA polymerase II-specific"/>
    <property type="evidence" value="ECO:0007669"/>
    <property type="project" value="InterPro"/>
</dbReference>
<dbReference type="CDD" id="cd00086">
    <property type="entry name" value="homeodomain"/>
    <property type="match status" value="1"/>
</dbReference>
<dbReference type="FunFam" id="1.10.10.60:FF:000076">
    <property type="entry name" value="Homeobox protein knotted-1-like 2"/>
    <property type="match status" value="1"/>
</dbReference>
<dbReference type="Gene3D" id="1.10.10.60">
    <property type="entry name" value="Homeodomain-like"/>
    <property type="match status" value="1"/>
</dbReference>
<dbReference type="InterPro" id="IPR005539">
    <property type="entry name" value="ELK_dom"/>
</dbReference>
<dbReference type="InterPro" id="IPR001356">
    <property type="entry name" value="HD"/>
</dbReference>
<dbReference type="InterPro" id="IPR017970">
    <property type="entry name" value="Homeobox_CS"/>
</dbReference>
<dbReference type="InterPro" id="IPR009057">
    <property type="entry name" value="Homeodomain-like_sf"/>
</dbReference>
<dbReference type="InterPro" id="IPR008422">
    <property type="entry name" value="KN_HD"/>
</dbReference>
<dbReference type="InterPro" id="IPR050224">
    <property type="entry name" value="TALE_homeobox"/>
</dbReference>
<dbReference type="PANTHER" id="PTHR11850">
    <property type="entry name" value="HOMEOBOX PROTEIN TRANSCRIPTION FACTORS"/>
    <property type="match status" value="1"/>
</dbReference>
<dbReference type="Pfam" id="PF03789">
    <property type="entry name" value="ELK"/>
    <property type="match status" value="1"/>
</dbReference>
<dbReference type="Pfam" id="PF05920">
    <property type="entry name" value="Homeobox_KN"/>
    <property type="match status" value="1"/>
</dbReference>
<dbReference type="SMART" id="SM01188">
    <property type="entry name" value="ELK"/>
    <property type="match status" value="1"/>
</dbReference>
<dbReference type="SMART" id="SM00389">
    <property type="entry name" value="HOX"/>
    <property type="match status" value="1"/>
</dbReference>
<dbReference type="SUPFAM" id="SSF46689">
    <property type="entry name" value="Homeodomain-like"/>
    <property type="match status" value="1"/>
</dbReference>
<dbReference type="PROSITE" id="PS51213">
    <property type="entry name" value="ELK"/>
    <property type="match status" value="1"/>
</dbReference>
<dbReference type="PROSITE" id="PS00027">
    <property type="entry name" value="HOMEOBOX_1"/>
    <property type="match status" value="1"/>
</dbReference>
<dbReference type="PROSITE" id="PS50071">
    <property type="entry name" value="HOMEOBOX_2"/>
    <property type="match status" value="1"/>
</dbReference>
<organism>
    <name type="scientific">Zea mays</name>
    <name type="common">Maize</name>
    <dbReference type="NCBI Taxonomy" id="4577"/>
    <lineage>
        <taxon>Eukaryota</taxon>
        <taxon>Viridiplantae</taxon>
        <taxon>Streptophyta</taxon>
        <taxon>Embryophyta</taxon>
        <taxon>Tracheophyta</taxon>
        <taxon>Spermatophyta</taxon>
        <taxon>Magnoliopsida</taxon>
        <taxon>Liliopsida</taxon>
        <taxon>Poales</taxon>
        <taxon>Poaceae</taxon>
        <taxon>PACMAD clade</taxon>
        <taxon>Panicoideae</taxon>
        <taxon>Andropogonodae</taxon>
        <taxon>Andropogoneae</taxon>
        <taxon>Tripsacinae</taxon>
        <taxon>Zea</taxon>
    </lineage>
</organism>
<name>KNOX4_MAIZE</name>
<accession>P56662</accession>
<protein>
    <recommendedName>
        <fullName>Homeobox protein knotted-1-like 4</fullName>
    </recommendedName>
</protein>
<feature type="chain" id="PRO_0000048965" description="Homeobox protein knotted-1-like 4">
    <location>
        <begin position="1" status="less than"/>
        <end position="85" status="greater than"/>
    </location>
</feature>
<feature type="domain" description="ELK" evidence="2">
    <location>
        <begin position="1"/>
        <end position="21"/>
    </location>
</feature>
<feature type="DNA-binding region" description="Homeobox; TALE-type" evidence="1">
    <location>
        <begin position="22"/>
        <end position="85"/>
    </location>
</feature>
<feature type="non-terminal residue">
    <location>
        <position position="1"/>
    </location>
</feature>
<feature type="non-terminal residue">
    <location>
        <position position="85"/>
    </location>
</feature>
<evidence type="ECO:0000255" key="1">
    <source>
        <dbReference type="PROSITE-ProRule" id="PRU00108"/>
    </source>
</evidence>
<evidence type="ECO:0000255" key="2">
    <source>
        <dbReference type="PROSITE-ProRule" id="PRU00559"/>
    </source>
</evidence>
<evidence type="ECO:0000305" key="3"/>
<sequence>ELKYQLLKKYSGYLSSLRQEFSKKKKKGKLPKEARQKLLHWWELHYKWPYPSETEKIALAEATGLDQKQINNWFINQRKRHWKPS</sequence>
<reference key="1">
    <citation type="journal article" date="1994" name="Plant Cell">
        <title>Sequence analysis and expression patterns divide the Maize knotted1-like homeobox genes into two classes.</title>
        <authorList>
            <person name="Kerstetter R."/>
            <person name="Vollbrecht E."/>
            <person name="Lowe B."/>
            <person name="Veit B."/>
            <person name="Yamaguchi J."/>
            <person name="Hake S."/>
        </authorList>
    </citation>
    <scope>NUCLEOTIDE SEQUENCE</scope>
    <source>
        <tissue>Ear of corn</tissue>
        <tissue>Seedling</tissue>
    </source>
</reference>
<gene>
    <name type="primary">KNOX4</name>
</gene>